<dbReference type="EMBL" id="CP000116">
    <property type="protein sequence ID" value="AAZ96654.1"/>
    <property type="molecule type" value="Genomic_DNA"/>
</dbReference>
<dbReference type="RefSeq" id="WP_011311213.1">
    <property type="nucleotide sequence ID" value="NC_007404.1"/>
</dbReference>
<dbReference type="SMR" id="Q3SKW8"/>
<dbReference type="STRING" id="292415.Tbd_0701"/>
<dbReference type="KEGG" id="tbd:Tbd_0701"/>
<dbReference type="eggNOG" id="COG0322">
    <property type="taxonomic scope" value="Bacteria"/>
</dbReference>
<dbReference type="HOGENOM" id="CLU_014841_3_0_4"/>
<dbReference type="OrthoDB" id="9804933at2"/>
<dbReference type="Proteomes" id="UP000008291">
    <property type="component" value="Chromosome"/>
</dbReference>
<dbReference type="GO" id="GO:0005737">
    <property type="term" value="C:cytoplasm"/>
    <property type="evidence" value="ECO:0007669"/>
    <property type="project" value="UniProtKB-SubCell"/>
</dbReference>
<dbReference type="GO" id="GO:0009380">
    <property type="term" value="C:excinuclease repair complex"/>
    <property type="evidence" value="ECO:0007669"/>
    <property type="project" value="InterPro"/>
</dbReference>
<dbReference type="GO" id="GO:0003677">
    <property type="term" value="F:DNA binding"/>
    <property type="evidence" value="ECO:0007669"/>
    <property type="project" value="UniProtKB-UniRule"/>
</dbReference>
<dbReference type="GO" id="GO:0009381">
    <property type="term" value="F:excinuclease ABC activity"/>
    <property type="evidence" value="ECO:0007669"/>
    <property type="project" value="UniProtKB-UniRule"/>
</dbReference>
<dbReference type="GO" id="GO:0006289">
    <property type="term" value="P:nucleotide-excision repair"/>
    <property type="evidence" value="ECO:0007669"/>
    <property type="project" value="UniProtKB-UniRule"/>
</dbReference>
<dbReference type="GO" id="GO:0009432">
    <property type="term" value="P:SOS response"/>
    <property type="evidence" value="ECO:0007669"/>
    <property type="project" value="UniProtKB-UniRule"/>
</dbReference>
<dbReference type="CDD" id="cd10434">
    <property type="entry name" value="GIY-YIG_UvrC_Cho"/>
    <property type="match status" value="1"/>
</dbReference>
<dbReference type="FunFam" id="1.10.150.20:FF:000005">
    <property type="entry name" value="UvrABC system protein C"/>
    <property type="match status" value="1"/>
</dbReference>
<dbReference type="FunFam" id="3.30.420.340:FF:000001">
    <property type="entry name" value="UvrABC system protein C"/>
    <property type="match status" value="1"/>
</dbReference>
<dbReference type="FunFam" id="3.40.1440.10:FF:000001">
    <property type="entry name" value="UvrABC system protein C"/>
    <property type="match status" value="1"/>
</dbReference>
<dbReference type="Gene3D" id="1.10.150.20">
    <property type="entry name" value="5' to 3' exonuclease, C-terminal subdomain"/>
    <property type="match status" value="1"/>
</dbReference>
<dbReference type="Gene3D" id="3.40.1440.10">
    <property type="entry name" value="GIY-YIG endonuclease"/>
    <property type="match status" value="1"/>
</dbReference>
<dbReference type="Gene3D" id="4.10.860.10">
    <property type="entry name" value="UVR domain"/>
    <property type="match status" value="1"/>
</dbReference>
<dbReference type="Gene3D" id="3.30.420.340">
    <property type="entry name" value="UvrC, RNAse H endonuclease domain"/>
    <property type="match status" value="1"/>
</dbReference>
<dbReference type="HAMAP" id="MF_00203">
    <property type="entry name" value="UvrC"/>
    <property type="match status" value="1"/>
</dbReference>
<dbReference type="InterPro" id="IPR000305">
    <property type="entry name" value="GIY-YIG_endonuc"/>
</dbReference>
<dbReference type="InterPro" id="IPR035901">
    <property type="entry name" value="GIY-YIG_endonuc_sf"/>
</dbReference>
<dbReference type="InterPro" id="IPR047296">
    <property type="entry name" value="GIY-YIG_UvrC_Cho"/>
</dbReference>
<dbReference type="InterPro" id="IPR003583">
    <property type="entry name" value="Hlx-hairpin-Hlx_DNA-bd_motif"/>
</dbReference>
<dbReference type="InterPro" id="IPR010994">
    <property type="entry name" value="RuvA_2-like"/>
</dbReference>
<dbReference type="InterPro" id="IPR001943">
    <property type="entry name" value="UVR_dom"/>
</dbReference>
<dbReference type="InterPro" id="IPR036876">
    <property type="entry name" value="UVR_dom_sf"/>
</dbReference>
<dbReference type="InterPro" id="IPR050066">
    <property type="entry name" value="UvrABC_protein_C"/>
</dbReference>
<dbReference type="InterPro" id="IPR004791">
    <property type="entry name" value="UvrC"/>
</dbReference>
<dbReference type="InterPro" id="IPR001162">
    <property type="entry name" value="UvrC_RNase_H_dom"/>
</dbReference>
<dbReference type="InterPro" id="IPR038476">
    <property type="entry name" value="UvrC_RNase_H_dom_sf"/>
</dbReference>
<dbReference type="NCBIfam" id="NF001824">
    <property type="entry name" value="PRK00558.1-5"/>
    <property type="match status" value="1"/>
</dbReference>
<dbReference type="NCBIfam" id="TIGR00194">
    <property type="entry name" value="uvrC"/>
    <property type="match status" value="1"/>
</dbReference>
<dbReference type="PANTHER" id="PTHR30562:SF1">
    <property type="entry name" value="UVRABC SYSTEM PROTEIN C"/>
    <property type="match status" value="1"/>
</dbReference>
<dbReference type="PANTHER" id="PTHR30562">
    <property type="entry name" value="UVRC/OXIDOREDUCTASE"/>
    <property type="match status" value="1"/>
</dbReference>
<dbReference type="Pfam" id="PF01541">
    <property type="entry name" value="GIY-YIG"/>
    <property type="match status" value="1"/>
</dbReference>
<dbReference type="Pfam" id="PF14520">
    <property type="entry name" value="HHH_5"/>
    <property type="match status" value="1"/>
</dbReference>
<dbReference type="Pfam" id="PF02151">
    <property type="entry name" value="UVR"/>
    <property type="match status" value="1"/>
</dbReference>
<dbReference type="Pfam" id="PF22920">
    <property type="entry name" value="UvrC_RNaseH"/>
    <property type="match status" value="1"/>
</dbReference>
<dbReference type="Pfam" id="PF08459">
    <property type="entry name" value="UvrC_RNaseH_dom"/>
    <property type="match status" value="1"/>
</dbReference>
<dbReference type="SMART" id="SM00465">
    <property type="entry name" value="GIYc"/>
    <property type="match status" value="1"/>
</dbReference>
<dbReference type="SMART" id="SM00278">
    <property type="entry name" value="HhH1"/>
    <property type="match status" value="2"/>
</dbReference>
<dbReference type="SUPFAM" id="SSF46600">
    <property type="entry name" value="C-terminal UvrC-binding domain of UvrB"/>
    <property type="match status" value="1"/>
</dbReference>
<dbReference type="SUPFAM" id="SSF82771">
    <property type="entry name" value="GIY-YIG endonuclease"/>
    <property type="match status" value="1"/>
</dbReference>
<dbReference type="SUPFAM" id="SSF47781">
    <property type="entry name" value="RuvA domain 2-like"/>
    <property type="match status" value="1"/>
</dbReference>
<dbReference type="PROSITE" id="PS50164">
    <property type="entry name" value="GIY_YIG"/>
    <property type="match status" value="1"/>
</dbReference>
<dbReference type="PROSITE" id="PS50151">
    <property type="entry name" value="UVR"/>
    <property type="match status" value="1"/>
</dbReference>
<dbReference type="PROSITE" id="PS50165">
    <property type="entry name" value="UVRC"/>
    <property type="match status" value="1"/>
</dbReference>
<accession>Q3SKW8</accession>
<keyword id="KW-0963">Cytoplasm</keyword>
<keyword id="KW-0227">DNA damage</keyword>
<keyword id="KW-0228">DNA excision</keyword>
<keyword id="KW-0234">DNA repair</keyword>
<keyword id="KW-0267">Excision nuclease</keyword>
<keyword id="KW-1185">Reference proteome</keyword>
<keyword id="KW-0742">SOS response</keyword>
<reference key="1">
    <citation type="journal article" date="2006" name="J. Bacteriol.">
        <title>The genome sequence of the obligately chemolithoautotrophic, facultatively anaerobic bacterium Thiobacillus denitrificans.</title>
        <authorList>
            <person name="Beller H.R."/>
            <person name="Chain P.S."/>
            <person name="Letain T.E."/>
            <person name="Chakicherla A."/>
            <person name="Larimer F.W."/>
            <person name="Richardson P.M."/>
            <person name="Coleman M.A."/>
            <person name="Wood A.P."/>
            <person name="Kelly D.P."/>
        </authorList>
    </citation>
    <scope>NUCLEOTIDE SEQUENCE [LARGE SCALE GENOMIC DNA]</scope>
    <source>
        <strain>ATCC 25259 / T1</strain>
    </source>
</reference>
<evidence type="ECO:0000255" key="1">
    <source>
        <dbReference type="HAMAP-Rule" id="MF_00203"/>
    </source>
</evidence>
<comment type="function">
    <text evidence="1">The UvrABC repair system catalyzes the recognition and processing of DNA lesions. UvrC both incises the 5' and 3' sides of the lesion. The N-terminal half is responsible for the 3' incision and the C-terminal half is responsible for the 5' incision.</text>
</comment>
<comment type="subunit">
    <text evidence="1">Interacts with UvrB in an incision complex.</text>
</comment>
<comment type="subcellular location">
    <subcellularLocation>
        <location evidence="1">Cytoplasm</location>
    </subcellularLocation>
</comment>
<comment type="similarity">
    <text evidence="1">Belongs to the UvrC family.</text>
</comment>
<protein>
    <recommendedName>
        <fullName evidence="1">UvrABC system protein C</fullName>
        <shortName evidence="1">Protein UvrC</shortName>
    </recommendedName>
    <alternativeName>
        <fullName evidence="1">Excinuclease ABC subunit C</fullName>
    </alternativeName>
</protein>
<organism>
    <name type="scientific">Thiobacillus denitrificans (strain ATCC 25259 / T1)</name>
    <dbReference type="NCBI Taxonomy" id="292415"/>
    <lineage>
        <taxon>Bacteria</taxon>
        <taxon>Pseudomonadati</taxon>
        <taxon>Pseudomonadota</taxon>
        <taxon>Betaproteobacteria</taxon>
        <taxon>Nitrosomonadales</taxon>
        <taxon>Thiobacillaceae</taxon>
        <taxon>Thiobacillus</taxon>
    </lineage>
</organism>
<proteinExistence type="inferred from homology"/>
<gene>
    <name evidence="1" type="primary">uvrC</name>
    <name type="ordered locus">Tbd_0701</name>
</gene>
<sequence length="598" mass="65968">MSVDKEFLASLPTLPGVYRMVDAAGAVLYVGKAKDLRKRVGSYFLKTDQSPRIRLMLKSVDHIDTTVTRTEAEALLLENNLIKGLKPRFNILFRDDKSYPYLLLTGHGYPRLAYFRGAPKKRDQAFGPYPNSYAVRESIQLLQKVFQLRTCEDTVFGNRSRPCLLHQIKRCSAPCVSLVSAETYARDVAEAMLLLKGEATALTEEITAQMNAAAENLDFETAAYLRDRLRMLATVREKQFVDTTGSEADADVVAVAEVGGVIAVNLTMIRGGRHLGDRSFFPQHGEGAALGEALEAFVAQHYLDHPIPARILVSEAIDSAALQTLLSEQAGKKVTLQHRVTGERRVWIAMAQANARLSAERRSADRANQSQRLAALRDTLELPTLNRIECFDISHTMGEATIASCVVYEGDDLKKSDYRRYNIEGITPGDDYAAMHAALIKRFHRTVEENGVLPDLLLIDGGKGQVAMAVEALAELGIDDVLLLGVAKGESRKPGLETLIFADGRELKLARDHPGFHLIQQVRDEAHRFAITGHRAKRGKARVQSTLEDIAGIGPKRRKQLLEHFGGLQGVRNAGVDALASVNGISRELAEIIYNALH</sequence>
<name>UVRC_THIDA</name>
<feature type="chain" id="PRO_0000264971" description="UvrABC system protein C">
    <location>
        <begin position="1"/>
        <end position="598"/>
    </location>
</feature>
<feature type="domain" description="GIY-YIG" evidence="1">
    <location>
        <begin position="13"/>
        <end position="91"/>
    </location>
</feature>
<feature type="domain" description="UVR" evidence="1">
    <location>
        <begin position="200"/>
        <end position="235"/>
    </location>
</feature>